<accession>B9KBW7</accession>
<keyword id="KW-0328">Glycosyltransferase</keyword>
<keyword id="KW-0460">Magnesium</keyword>
<keyword id="KW-0665">Pyrimidine biosynthesis</keyword>
<keyword id="KW-0808">Transferase</keyword>
<dbReference type="EC" id="2.4.2.10" evidence="1"/>
<dbReference type="EMBL" id="CP000916">
    <property type="protein sequence ID" value="ACM22513.1"/>
    <property type="molecule type" value="Genomic_DNA"/>
</dbReference>
<dbReference type="RefSeq" id="WP_011943204.1">
    <property type="nucleotide sequence ID" value="NC_011978.1"/>
</dbReference>
<dbReference type="SMR" id="B9KBW7"/>
<dbReference type="STRING" id="309803.CTN_0337"/>
<dbReference type="KEGG" id="tna:CTN_0337"/>
<dbReference type="eggNOG" id="COG0461">
    <property type="taxonomic scope" value="Bacteria"/>
</dbReference>
<dbReference type="HOGENOM" id="CLU_074878_3_0_0"/>
<dbReference type="UniPathway" id="UPA00070">
    <property type="reaction ID" value="UER00119"/>
</dbReference>
<dbReference type="Proteomes" id="UP000000445">
    <property type="component" value="Chromosome"/>
</dbReference>
<dbReference type="GO" id="GO:0000287">
    <property type="term" value="F:magnesium ion binding"/>
    <property type="evidence" value="ECO:0007669"/>
    <property type="project" value="UniProtKB-UniRule"/>
</dbReference>
<dbReference type="GO" id="GO:0004588">
    <property type="term" value="F:orotate phosphoribosyltransferase activity"/>
    <property type="evidence" value="ECO:0007669"/>
    <property type="project" value="UniProtKB-UniRule"/>
</dbReference>
<dbReference type="GO" id="GO:0044205">
    <property type="term" value="P:'de novo' UMP biosynthetic process"/>
    <property type="evidence" value="ECO:0007669"/>
    <property type="project" value="UniProtKB-UniRule"/>
</dbReference>
<dbReference type="GO" id="GO:0019856">
    <property type="term" value="P:pyrimidine nucleobase biosynthetic process"/>
    <property type="evidence" value="ECO:0007669"/>
    <property type="project" value="InterPro"/>
</dbReference>
<dbReference type="CDD" id="cd06223">
    <property type="entry name" value="PRTases_typeI"/>
    <property type="match status" value="1"/>
</dbReference>
<dbReference type="Gene3D" id="3.40.50.2020">
    <property type="match status" value="1"/>
</dbReference>
<dbReference type="HAMAP" id="MF_01208">
    <property type="entry name" value="PyrE"/>
    <property type="match status" value="1"/>
</dbReference>
<dbReference type="InterPro" id="IPR023031">
    <property type="entry name" value="OPRT"/>
</dbReference>
<dbReference type="InterPro" id="IPR006273">
    <property type="entry name" value="Orotate_PRibTrfase_bac"/>
</dbReference>
<dbReference type="InterPro" id="IPR000836">
    <property type="entry name" value="PRibTrfase_dom"/>
</dbReference>
<dbReference type="InterPro" id="IPR029057">
    <property type="entry name" value="PRTase-like"/>
</dbReference>
<dbReference type="NCBIfam" id="TIGR01367">
    <property type="entry name" value="pyrE_Therm"/>
    <property type="match status" value="1"/>
</dbReference>
<dbReference type="PANTHER" id="PTHR19278">
    <property type="entry name" value="OROTATE PHOSPHORIBOSYLTRANSFERASE"/>
    <property type="match status" value="1"/>
</dbReference>
<dbReference type="PANTHER" id="PTHR19278:SF9">
    <property type="entry name" value="URIDINE 5'-MONOPHOSPHATE SYNTHASE"/>
    <property type="match status" value="1"/>
</dbReference>
<dbReference type="Pfam" id="PF00156">
    <property type="entry name" value="Pribosyltran"/>
    <property type="match status" value="1"/>
</dbReference>
<dbReference type="SUPFAM" id="SSF53271">
    <property type="entry name" value="PRTase-like"/>
    <property type="match status" value="1"/>
</dbReference>
<sequence>MIKEILEKTGALMEGHFILSSGKHSSRYVQCARLFEFPEYGDIVGEELAKLLRKYDVETVVGPAMGGVILSYVVARYLKARSLFAERENGVMKLRRGFFVRPGEKAAVVEDVVTTGGSVKEVIELLKEYGANVVCVGSIIDRSGGKVDFGVPFESLLKLDLPVYDPEDCPLCKQGIPAEKPGSRGLK</sequence>
<reference key="1">
    <citation type="submission" date="2007-11" db="EMBL/GenBank/DDBJ databases">
        <title>The genome sequence of the hyperthermophilic bacterium Thermotoga neapolitana.</title>
        <authorList>
            <person name="Lim S.K."/>
            <person name="Kim J.S."/>
            <person name="Cha S.H."/>
            <person name="Park B.C."/>
            <person name="Lee D.S."/>
            <person name="Tae H.S."/>
            <person name="Kim S.-J."/>
            <person name="Kim J.J."/>
            <person name="Park K.J."/>
            <person name="Lee S.Y."/>
        </authorList>
    </citation>
    <scope>NUCLEOTIDE SEQUENCE [LARGE SCALE GENOMIC DNA]</scope>
    <source>
        <strain>ATCC 49049 / DSM 4359 / NBRC 107923 / NS-E</strain>
    </source>
</reference>
<comment type="function">
    <text evidence="1">Catalyzes the transfer of a ribosyl phosphate group from 5-phosphoribose 1-diphosphate to orotate, leading to the formation of orotidine monophosphate (OMP).</text>
</comment>
<comment type="catalytic activity">
    <reaction evidence="1">
        <text>orotidine 5'-phosphate + diphosphate = orotate + 5-phospho-alpha-D-ribose 1-diphosphate</text>
        <dbReference type="Rhea" id="RHEA:10380"/>
        <dbReference type="ChEBI" id="CHEBI:30839"/>
        <dbReference type="ChEBI" id="CHEBI:33019"/>
        <dbReference type="ChEBI" id="CHEBI:57538"/>
        <dbReference type="ChEBI" id="CHEBI:58017"/>
        <dbReference type="EC" id="2.4.2.10"/>
    </reaction>
</comment>
<comment type="cofactor">
    <cofactor evidence="1">
        <name>Mg(2+)</name>
        <dbReference type="ChEBI" id="CHEBI:18420"/>
    </cofactor>
</comment>
<comment type="pathway">
    <text evidence="1">Pyrimidine metabolism; UMP biosynthesis via de novo pathway; UMP from orotate: step 1/2.</text>
</comment>
<comment type="subunit">
    <text evidence="1">Homodimer.</text>
</comment>
<comment type="similarity">
    <text evidence="1">Belongs to the purine/pyrimidine phosphoribosyltransferase family. PyrE subfamily.</text>
</comment>
<organism>
    <name type="scientific">Thermotoga neapolitana (strain ATCC 49049 / DSM 4359 / NBRC 107923 / NS-E)</name>
    <dbReference type="NCBI Taxonomy" id="309803"/>
    <lineage>
        <taxon>Bacteria</taxon>
        <taxon>Thermotogati</taxon>
        <taxon>Thermotogota</taxon>
        <taxon>Thermotogae</taxon>
        <taxon>Thermotogales</taxon>
        <taxon>Thermotogaceae</taxon>
        <taxon>Thermotoga</taxon>
    </lineage>
</organism>
<proteinExistence type="inferred from homology"/>
<gene>
    <name evidence="1" type="primary">pyrE</name>
    <name type="ordered locus">CTN_0337</name>
</gene>
<evidence type="ECO:0000255" key="1">
    <source>
        <dbReference type="HAMAP-Rule" id="MF_01208"/>
    </source>
</evidence>
<name>PYRE_THENN</name>
<protein>
    <recommendedName>
        <fullName evidence="1">Orotate phosphoribosyltransferase</fullName>
        <shortName evidence="1">OPRT</shortName>
        <shortName evidence="1">OPRTase</shortName>
        <ecNumber evidence="1">2.4.2.10</ecNumber>
    </recommendedName>
</protein>
<feature type="chain" id="PRO_1000164692" description="Orotate phosphoribosyltransferase">
    <location>
        <begin position="1"/>
        <end position="187"/>
    </location>
</feature>
<feature type="binding site" evidence="1">
    <location>
        <begin position="110"/>
        <end position="118"/>
    </location>
    <ligand>
        <name>5-phospho-alpha-D-ribose 1-diphosphate</name>
        <dbReference type="ChEBI" id="CHEBI:58017"/>
    </ligand>
</feature>
<feature type="binding site" evidence="1">
    <location>
        <position position="114"/>
    </location>
    <ligand>
        <name>orotate</name>
        <dbReference type="ChEBI" id="CHEBI:30839"/>
    </ligand>
</feature>
<feature type="binding site" evidence="1">
    <location>
        <position position="142"/>
    </location>
    <ligand>
        <name>orotate</name>
        <dbReference type="ChEBI" id="CHEBI:30839"/>
    </ligand>
</feature>